<sequence>VQWSSSERSTISTLWGKINVAEIGPQALARVLIVYPWTQRYFGKFGDLSSVAAIVGNANGAKHGRTVLQALGQAVNNMDNIKGTYAKLSQKHSEELNVDPDNFRLLGDCLTVVLATKFGAEFPPEVQAVWQKFVAVVVSALSRQYF</sequence>
<organism>
    <name type="scientific">Conger conger</name>
    <name type="common">Conger eel</name>
    <name type="synonym">Muraena conger</name>
    <dbReference type="NCBI Taxonomy" id="82655"/>
    <lineage>
        <taxon>Eukaryota</taxon>
        <taxon>Metazoa</taxon>
        <taxon>Chordata</taxon>
        <taxon>Craniata</taxon>
        <taxon>Vertebrata</taxon>
        <taxon>Euteleostomi</taxon>
        <taxon>Actinopterygii</taxon>
        <taxon>Neopterygii</taxon>
        <taxon>Teleostei</taxon>
        <taxon>Anguilliformes</taxon>
        <taxon>Congridae</taxon>
        <taxon>Conger</taxon>
    </lineage>
</organism>
<comment type="function">
    <text>Involved in oxygen transport from the gills to the various peripheral tissues.</text>
</comment>
<comment type="subunit">
    <text evidence="1">Heterotetramer of two alpha chains and two beta chains.</text>
</comment>
<comment type="tissue specificity">
    <text evidence="3">Red blood cells.</text>
</comment>
<comment type="mass spectrometry"/>
<comment type="miscellaneous">
    <text>This fish has two types of hemoglobin: one cathodic Hb and two major anodic Hbs. The cathodic Hb displays a small normal Bohr effect and a reverse Bohr effect in the presence and absence of phosphate respectively. In addition, the cathodic HB displays a large phosphate effect.</text>
</comment>
<comment type="similarity">
    <text evidence="2">Belongs to the globin family.</text>
</comment>
<keyword id="KW-0903">Direct protein sequencing</keyword>
<keyword id="KW-0349">Heme</keyword>
<keyword id="KW-0408">Iron</keyword>
<keyword id="KW-0479">Metal-binding</keyword>
<keyword id="KW-0561">Oxygen transport</keyword>
<keyword id="KW-0813">Transport</keyword>
<accession>P83478</accession>
<name>HBBC_CONCO</name>
<evidence type="ECO:0000250" key="1"/>
<evidence type="ECO:0000255" key="2">
    <source>
        <dbReference type="PROSITE-ProRule" id="PRU00238"/>
    </source>
</evidence>
<evidence type="ECO:0000269" key="3">
    <source>
    </source>
</evidence>
<reference key="1">
    <citation type="journal article" date="2003" name="Biochem. J.">
        <title>Structural-functional characterization of the cathodic haemoglobin of the conger eel Conger conger: molecular modelling study of an additional phosphate-binding site.</title>
        <authorList>
            <person name="Pellegrini M."/>
            <person name="Giardina B."/>
            <person name="Verde C."/>
            <person name="Carratore V."/>
            <person name="Olianas A."/>
            <person name="Sollai L."/>
            <person name="Sanna M.T."/>
            <person name="Castagnola M."/>
            <person name="Di Prisco G."/>
        </authorList>
    </citation>
    <scope>PROTEIN SEQUENCE</scope>
    <scope>TISSUE SPECIFICITY</scope>
    <scope>MASS SPECTROMETRY</scope>
    <source>
        <tissue>Erythrocyte</tissue>
    </source>
</reference>
<feature type="chain" id="PRO_0000052934" description="Hemoglobin cathodic subunit beta">
    <location>
        <begin position="1"/>
        <end position="146"/>
    </location>
</feature>
<feature type="domain" description="Globin" evidence="2">
    <location>
        <begin position="2"/>
        <end position="146"/>
    </location>
</feature>
<feature type="binding site" description="distal binding residue" evidence="2">
    <location>
        <position position="63"/>
    </location>
    <ligand>
        <name>heme b</name>
        <dbReference type="ChEBI" id="CHEBI:60344"/>
    </ligand>
    <ligandPart>
        <name>Fe</name>
        <dbReference type="ChEBI" id="CHEBI:18248"/>
    </ligandPart>
</feature>
<feature type="binding site" description="proximal binding residue" evidence="2">
    <location>
        <position position="92"/>
    </location>
    <ligand>
        <name>heme b</name>
        <dbReference type="ChEBI" id="CHEBI:60344"/>
    </ligand>
    <ligandPart>
        <name>Fe</name>
        <dbReference type="ChEBI" id="CHEBI:18248"/>
    </ligandPart>
</feature>
<dbReference type="SMR" id="P83478"/>
<dbReference type="GO" id="GO:0072562">
    <property type="term" value="C:blood microparticle"/>
    <property type="evidence" value="ECO:0007669"/>
    <property type="project" value="TreeGrafter"/>
</dbReference>
<dbReference type="GO" id="GO:0031838">
    <property type="term" value="C:haptoglobin-hemoglobin complex"/>
    <property type="evidence" value="ECO:0007669"/>
    <property type="project" value="TreeGrafter"/>
</dbReference>
<dbReference type="GO" id="GO:0005833">
    <property type="term" value="C:hemoglobin complex"/>
    <property type="evidence" value="ECO:0007669"/>
    <property type="project" value="InterPro"/>
</dbReference>
<dbReference type="GO" id="GO:0031720">
    <property type="term" value="F:haptoglobin binding"/>
    <property type="evidence" value="ECO:0007669"/>
    <property type="project" value="TreeGrafter"/>
</dbReference>
<dbReference type="GO" id="GO:0020037">
    <property type="term" value="F:heme binding"/>
    <property type="evidence" value="ECO:0007669"/>
    <property type="project" value="InterPro"/>
</dbReference>
<dbReference type="GO" id="GO:0046872">
    <property type="term" value="F:metal ion binding"/>
    <property type="evidence" value="ECO:0007669"/>
    <property type="project" value="UniProtKB-KW"/>
</dbReference>
<dbReference type="GO" id="GO:0043177">
    <property type="term" value="F:organic acid binding"/>
    <property type="evidence" value="ECO:0007669"/>
    <property type="project" value="TreeGrafter"/>
</dbReference>
<dbReference type="GO" id="GO:0019825">
    <property type="term" value="F:oxygen binding"/>
    <property type="evidence" value="ECO:0007669"/>
    <property type="project" value="InterPro"/>
</dbReference>
<dbReference type="GO" id="GO:0005344">
    <property type="term" value="F:oxygen carrier activity"/>
    <property type="evidence" value="ECO:0007669"/>
    <property type="project" value="UniProtKB-KW"/>
</dbReference>
<dbReference type="GO" id="GO:0004601">
    <property type="term" value="F:peroxidase activity"/>
    <property type="evidence" value="ECO:0007669"/>
    <property type="project" value="TreeGrafter"/>
</dbReference>
<dbReference type="GO" id="GO:0042744">
    <property type="term" value="P:hydrogen peroxide catabolic process"/>
    <property type="evidence" value="ECO:0007669"/>
    <property type="project" value="TreeGrafter"/>
</dbReference>
<dbReference type="CDD" id="cd08925">
    <property type="entry name" value="Hb-beta-like"/>
    <property type="match status" value="1"/>
</dbReference>
<dbReference type="FunFam" id="1.10.490.10:FF:000001">
    <property type="entry name" value="Hemoglobin subunit beta"/>
    <property type="match status" value="1"/>
</dbReference>
<dbReference type="Gene3D" id="1.10.490.10">
    <property type="entry name" value="Globins"/>
    <property type="match status" value="1"/>
</dbReference>
<dbReference type="InterPro" id="IPR000971">
    <property type="entry name" value="Globin"/>
</dbReference>
<dbReference type="InterPro" id="IPR009050">
    <property type="entry name" value="Globin-like_sf"/>
</dbReference>
<dbReference type="InterPro" id="IPR012292">
    <property type="entry name" value="Globin/Proto"/>
</dbReference>
<dbReference type="InterPro" id="IPR002337">
    <property type="entry name" value="Hemoglobin_b"/>
</dbReference>
<dbReference type="InterPro" id="IPR050056">
    <property type="entry name" value="Hemoglobin_oxygen_transport"/>
</dbReference>
<dbReference type="PANTHER" id="PTHR11442">
    <property type="entry name" value="HEMOGLOBIN FAMILY MEMBER"/>
    <property type="match status" value="1"/>
</dbReference>
<dbReference type="PANTHER" id="PTHR11442:SF7">
    <property type="entry name" value="HEMOGLOBIN SUBUNIT EPSILON"/>
    <property type="match status" value="1"/>
</dbReference>
<dbReference type="Pfam" id="PF00042">
    <property type="entry name" value="Globin"/>
    <property type="match status" value="1"/>
</dbReference>
<dbReference type="PRINTS" id="PR00814">
    <property type="entry name" value="BETAHAEM"/>
</dbReference>
<dbReference type="SUPFAM" id="SSF46458">
    <property type="entry name" value="Globin-like"/>
    <property type="match status" value="1"/>
</dbReference>
<dbReference type="PROSITE" id="PS01033">
    <property type="entry name" value="GLOBIN"/>
    <property type="match status" value="1"/>
</dbReference>
<protein>
    <recommendedName>
        <fullName>Hemoglobin cathodic subunit beta</fullName>
    </recommendedName>
    <alternativeName>
        <fullName>Hemoglobin cathodic beta chain</fullName>
    </alternativeName>
</protein>
<proteinExistence type="evidence at protein level"/>